<keyword id="KW-0067">ATP-binding</keyword>
<keyword id="KW-0119">Carbohydrate metabolism</keyword>
<keyword id="KW-0418">Kinase</keyword>
<keyword id="KW-0547">Nucleotide-binding</keyword>
<keyword id="KW-0808">Transferase</keyword>
<dbReference type="EC" id="2.7.1.170" evidence="1"/>
<dbReference type="EMBL" id="BX569694">
    <property type="protein sequence ID" value="CAE08685.1"/>
    <property type="molecule type" value="Genomic_DNA"/>
</dbReference>
<dbReference type="RefSeq" id="WP_011129025.1">
    <property type="nucleotide sequence ID" value="NC_005070.1"/>
</dbReference>
<dbReference type="SMR" id="Q7U4A1"/>
<dbReference type="STRING" id="84588.SYNW2170"/>
<dbReference type="KEGG" id="syw:SYNW2170"/>
<dbReference type="eggNOG" id="COG2377">
    <property type="taxonomic scope" value="Bacteria"/>
</dbReference>
<dbReference type="HOGENOM" id="CLU_038782_1_0_3"/>
<dbReference type="UniPathway" id="UPA00343"/>
<dbReference type="UniPathway" id="UPA00544"/>
<dbReference type="Proteomes" id="UP000001422">
    <property type="component" value="Chromosome"/>
</dbReference>
<dbReference type="GO" id="GO:0005524">
    <property type="term" value="F:ATP binding"/>
    <property type="evidence" value="ECO:0007669"/>
    <property type="project" value="UniProtKB-UniRule"/>
</dbReference>
<dbReference type="GO" id="GO:0016301">
    <property type="term" value="F:kinase activity"/>
    <property type="evidence" value="ECO:0007669"/>
    <property type="project" value="UniProtKB-KW"/>
</dbReference>
<dbReference type="GO" id="GO:0016773">
    <property type="term" value="F:phosphotransferase activity, alcohol group as acceptor"/>
    <property type="evidence" value="ECO:0007669"/>
    <property type="project" value="UniProtKB-UniRule"/>
</dbReference>
<dbReference type="GO" id="GO:0097175">
    <property type="term" value="P:1,6-anhydro-N-acetyl-beta-muramic acid catabolic process"/>
    <property type="evidence" value="ECO:0007669"/>
    <property type="project" value="UniProtKB-UniRule"/>
</dbReference>
<dbReference type="GO" id="GO:0006040">
    <property type="term" value="P:amino sugar metabolic process"/>
    <property type="evidence" value="ECO:0007669"/>
    <property type="project" value="InterPro"/>
</dbReference>
<dbReference type="GO" id="GO:0009254">
    <property type="term" value="P:peptidoglycan turnover"/>
    <property type="evidence" value="ECO:0007669"/>
    <property type="project" value="UniProtKB-UniRule"/>
</dbReference>
<dbReference type="Gene3D" id="3.30.420.40">
    <property type="match status" value="2"/>
</dbReference>
<dbReference type="HAMAP" id="MF_01270">
    <property type="entry name" value="AnhMurNAc_kinase"/>
    <property type="match status" value="1"/>
</dbReference>
<dbReference type="InterPro" id="IPR005338">
    <property type="entry name" value="Anhydro_N_Ac-Mur_kinase"/>
</dbReference>
<dbReference type="InterPro" id="IPR043129">
    <property type="entry name" value="ATPase_NBD"/>
</dbReference>
<dbReference type="NCBIfam" id="NF007145">
    <property type="entry name" value="PRK09585.2-5"/>
    <property type="match status" value="1"/>
</dbReference>
<dbReference type="PANTHER" id="PTHR30605">
    <property type="entry name" value="ANHYDRO-N-ACETYLMURAMIC ACID KINASE"/>
    <property type="match status" value="1"/>
</dbReference>
<dbReference type="PANTHER" id="PTHR30605:SF0">
    <property type="entry name" value="ANHYDRO-N-ACETYLMURAMIC ACID KINASE"/>
    <property type="match status" value="1"/>
</dbReference>
<dbReference type="Pfam" id="PF03702">
    <property type="entry name" value="AnmK"/>
    <property type="match status" value="1"/>
</dbReference>
<dbReference type="SUPFAM" id="SSF53067">
    <property type="entry name" value="Actin-like ATPase domain"/>
    <property type="match status" value="1"/>
</dbReference>
<evidence type="ECO:0000255" key="1">
    <source>
        <dbReference type="HAMAP-Rule" id="MF_01270"/>
    </source>
</evidence>
<reference key="1">
    <citation type="journal article" date="2003" name="Nature">
        <title>The genome of a motile marine Synechococcus.</title>
        <authorList>
            <person name="Palenik B."/>
            <person name="Brahamsha B."/>
            <person name="Larimer F.W."/>
            <person name="Land M.L."/>
            <person name="Hauser L."/>
            <person name="Chain P."/>
            <person name="Lamerdin J.E."/>
            <person name="Regala W."/>
            <person name="Allen E.E."/>
            <person name="McCarren J."/>
            <person name="Paulsen I.T."/>
            <person name="Dufresne A."/>
            <person name="Partensky F."/>
            <person name="Webb E.A."/>
            <person name="Waterbury J."/>
        </authorList>
    </citation>
    <scope>NUCLEOTIDE SEQUENCE [LARGE SCALE GENOMIC DNA]</scope>
    <source>
        <strain>WH8102</strain>
    </source>
</reference>
<gene>
    <name evidence="1" type="primary">anmK</name>
    <name type="ordered locus">SYNW2170</name>
</gene>
<sequence>MLCLGLMSGTSADGVDAVLARFQGAPDRPEWQLLSHHHSPYPAALRDELVRIGQGEARPAAALLDLAEAVTEHQALAARGADPDQRASLIGCHGQTLWHRPPSSDKRGASWQLLLAPLLAQLLARPVVHDFRATDLALGGQGAPLVPRADAALIGPGDGWRGVLNLGGIANLTLIPPRWGPQKQESVLGWDCGPANSLIDLAMEQFSDGQQLFDRDGAMAAAGRCDDGMIQRWLREPYFQLSPPKSTGRECFGQEDLRRRLQELESVERADAVATLTGFTAAVVAQDLDRLRADRSIHLLELLVAGGGCRNPVLMSELQRRCRGLAVRASDQIGLAAEAREALVFALLAWWHHRGHPGNAPAITGATREACLGVRVAPA</sequence>
<feature type="chain" id="PRO_0000250073" description="Anhydro-N-acetylmuramic acid kinase">
    <location>
        <begin position="1"/>
        <end position="379"/>
    </location>
</feature>
<feature type="binding site" evidence="1">
    <location>
        <begin position="9"/>
        <end position="16"/>
    </location>
    <ligand>
        <name>ATP</name>
        <dbReference type="ChEBI" id="CHEBI:30616"/>
    </ligand>
</feature>
<proteinExistence type="inferred from homology"/>
<organism>
    <name type="scientific">Parasynechococcus marenigrum (strain WH8102)</name>
    <dbReference type="NCBI Taxonomy" id="84588"/>
    <lineage>
        <taxon>Bacteria</taxon>
        <taxon>Bacillati</taxon>
        <taxon>Cyanobacteriota</taxon>
        <taxon>Cyanophyceae</taxon>
        <taxon>Synechococcales</taxon>
        <taxon>Prochlorococcaceae</taxon>
        <taxon>Parasynechococcus</taxon>
        <taxon>Parasynechococcus marenigrum</taxon>
    </lineage>
</organism>
<comment type="function">
    <text evidence="1">Catalyzes the specific phosphorylation of 1,6-anhydro-N-acetylmuramic acid (anhMurNAc) with the simultaneous cleavage of the 1,6-anhydro ring, generating MurNAc-6-P. Is required for the utilization of anhMurNAc either imported from the medium or derived from its own cell wall murein, and thus plays a role in cell wall recycling.</text>
</comment>
<comment type="catalytic activity">
    <reaction evidence="1">
        <text>1,6-anhydro-N-acetyl-beta-muramate + ATP + H2O = N-acetyl-D-muramate 6-phosphate + ADP + H(+)</text>
        <dbReference type="Rhea" id="RHEA:24952"/>
        <dbReference type="ChEBI" id="CHEBI:15377"/>
        <dbReference type="ChEBI" id="CHEBI:15378"/>
        <dbReference type="ChEBI" id="CHEBI:30616"/>
        <dbReference type="ChEBI" id="CHEBI:58690"/>
        <dbReference type="ChEBI" id="CHEBI:58722"/>
        <dbReference type="ChEBI" id="CHEBI:456216"/>
        <dbReference type="EC" id="2.7.1.170"/>
    </reaction>
</comment>
<comment type="pathway">
    <text evidence="1">Amino-sugar metabolism; 1,6-anhydro-N-acetylmuramate degradation.</text>
</comment>
<comment type="pathway">
    <text evidence="1">Cell wall biogenesis; peptidoglycan recycling.</text>
</comment>
<comment type="similarity">
    <text evidence="1">Belongs to the anhydro-N-acetylmuramic acid kinase family.</text>
</comment>
<protein>
    <recommendedName>
        <fullName evidence="1">Anhydro-N-acetylmuramic acid kinase</fullName>
        <ecNumber evidence="1">2.7.1.170</ecNumber>
    </recommendedName>
    <alternativeName>
        <fullName evidence="1">AnhMurNAc kinase</fullName>
    </alternativeName>
</protein>
<name>ANMK_PARMW</name>
<accession>Q7U4A1</accession>